<gene>
    <name evidence="1" type="primary">rpsK</name>
    <name type="ordered locus">PXO_04498</name>
</gene>
<sequence>MAKPVEKKTKKKIKRVITDGVAHVHASFNNTIVTITDRQGNALSWATSGGAGFRGSRKSTPFAAQVAAEKAGRAALDYGVKSLEVRIKGPGPGRESAVRSLNNVGYKITNIIDVTPIPHNGCRPPKKRRV</sequence>
<keyword id="KW-0687">Ribonucleoprotein</keyword>
<keyword id="KW-0689">Ribosomal protein</keyword>
<keyword id="KW-0694">RNA-binding</keyword>
<keyword id="KW-0699">rRNA-binding</keyword>
<accession>B2SQT2</accession>
<protein>
    <recommendedName>
        <fullName evidence="1">Small ribosomal subunit protein uS11</fullName>
    </recommendedName>
    <alternativeName>
        <fullName evidence="2">30S ribosomal protein S11</fullName>
    </alternativeName>
</protein>
<reference key="1">
    <citation type="journal article" date="2008" name="BMC Genomics">
        <title>Genome sequence and rapid evolution of the rice pathogen Xanthomonas oryzae pv. oryzae PXO99A.</title>
        <authorList>
            <person name="Salzberg S.L."/>
            <person name="Sommer D.D."/>
            <person name="Schatz M.C."/>
            <person name="Phillippy A.M."/>
            <person name="Rabinowicz P.D."/>
            <person name="Tsuge S."/>
            <person name="Furutani A."/>
            <person name="Ochiai H."/>
            <person name="Delcher A.L."/>
            <person name="Kelley D."/>
            <person name="Madupu R."/>
            <person name="Puiu D."/>
            <person name="Radune D."/>
            <person name="Shumway M."/>
            <person name="Trapnell C."/>
            <person name="Aparna G."/>
            <person name="Jha G."/>
            <person name="Pandey A."/>
            <person name="Patil P.B."/>
            <person name="Ishihara H."/>
            <person name="Meyer D.F."/>
            <person name="Szurek B."/>
            <person name="Verdier V."/>
            <person name="Koebnik R."/>
            <person name="Dow J.M."/>
            <person name="Ryan R.P."/>
            <person name="Hirata H."/>
            <person name="Tsuyumu S."/>
            <person name="Won Lee S."/>
            <person name="Seo Y.-S."/>
            <person name="Sriariyanum M."/>
            <person name="Ronald P.C."/>
            <person name="Sonti R.V."/>
            <person name="Van Sluys M.-A."/>
            <person name="Leach J.E."/>
            <person name="White F.F."/>
            <person name="Bogdanove A.J."/>
        </authorList>
    </citation>
    <scope>NUCLEOTIDE SEQUENCE [LARGE SCALE GENOMIC DNA]</scope>
    <source>
        <strain>PXO99A</strain>
    </source>
</reference>
<dbReference type="EMBL" id="CP000967">
    <property type="protein sequence ID" value="ACD57909.1"/>
    <property type="molecule type" value="Genomic_DNA"/>
</dbReference>
<dbReference type="RefSeq" id="WP_011260019.1">
    <property type="nucleotide sequence ID" value="NC_010717.2"/>
</dbReference>
<dbReference type="SMR" id="B2SQT2"/>
<dbReference type="GeneID" id="77338691"/>
<dbReference type="KEGG" id="xop:PXO_04498"/>
<dbReference type="eggNOG" id="COG0100">
    <property type="taxonomic scope" value="Bacteria"/>
</dbReference>
<dbReference type="HOGENOM" id="CLU_072439_5_0_6"/>
<dbReference type="Proteomes" id="UP000001740">
    <property type="component" value="Chromosome"/>
</dbReference>
<dbReference type="GO" id="GO:1990904">
    <property type="term" value="C:ribonucleoprotein complex"/>
    <property type="evidence" value="ECO:0007669"/>
    <property type="project" value="UniProtKB-KW"/>
</dbReference>
<dbReference type="GO" id="GO:0005840">
    <property type="term" value="C:ribosome"/>
    <property type="evidence" value="ECO:0007669"/>
    <property type="project" value="UniProtKB-KW"/>
</dbReference>
<dbReference type="GO" id="GO:0019843">
    <property type="term" value="F:rRNA binding"/>
    <property type="evidence" value="ECO:0007669"/>
    <property type="project" value="UniProtKB-UniRule"/>
</dbReference>
<dbReference type="GO" id="GO:0003735">
    <property type="term" value="F:structural constituent of ribosome"/>
    <property type="evidence" value="ECO:0007669"/>
    <property type="project" value="InterPro"/>
</dbReference>
<dbReference type="GO" id="GO:0006412">
    <property type="term" value="P:translation"/>
    <property type="evidence" value="ECO:0007669"/>
    <property type="project" value="UniProtKB-UniRule"/>
</dbReference>
<dbReference type="FunFam" id="3.30.420.80:FF:000001">
    <property type="entry name" value="30S ribosomal protein S11"/>
    <property type="match status" value="1"/>
</dbReference>
<dbReference type="Gene3D" id="3.30.420.80">
    <property type="entry name" value="Ribosomal protein S11"/>
    <property type="match status" value="1"/>
</dbReference>
<dbReference type="HAMAP" id="MF_01310">
    <property type="entry name" value="Ribosomal_uS11"/>
    <property type="match status" value="1"/>
</dbReference>
<dbReference type="InterPro" id="IPR001971">
    <property type="entry name" value="Ribosomal_uS11"/>
</dbReference>
<dbReference type="InterPro" id="IPR019981">
    <property type="entry name" value="Ribosomal_uS11_bac-type"/>
</dbReference>
<dbReference type="InterPro" id="IPR018102">
    <property type="entry name" value="Ribosomal_uS11_CS"/>
</dbReference>
<dbReference type="InterPro" id="IPR036967">
    <property type="entry name" value="Ribosomal_uS11_sf"/>
</dbReference>
<dbReference type="NCBIfam" id="NF003698">
    <property type="entry name" value="PRK05309.1"/>
    <property type="match status" value="1"/>
</dbReference>
<dbReference type="NCBIfam" id="TIGR03632">
    <property type="entry name" value="uS11_bact"/>
    <property type="match status" value="1"/>
</dbReference>
<dbReference type="PANTHER" id="PTHR11759">
    <property type="entry name" value="40S RIBOSOMAL PROTEIN S14/30S RIBOSOMAL PROTEIN S11"/>
    <property type="match status" value="1"/>
</dbReference>
<dbReference type="Pfam" id="PF00411">
    <property type="entry name" value="Ribosomal_S11"/>
    <property type="match status" value="1"/>
</dbReference>
<dbReference type="PIRSF" id="PIRSF002131">
    <property type="entry name" value="Ribosomal_S11"/>
    <property type="match status" value="1"/>
</dbReference>
<dbReference type="SUPFAM" id="SSF53137">
    <property type="entry name" value="Translational machinery components"/>
    <property type="match status" value="1"/>
</dbReference>
<dbReference type="PROSITE" id="PS00054">
    <property type="entry name" value="RIBOSOMAL_S11"/>
    <property type="match status" value="1"/>
</dbReference>
<feature type="chain" id="PRO_1000141159" description="Small ribosomal subunit protein uS11">
    <location>
        <begin position="1"/>
        <end position="130"/>
    </location>
</feature>
<organism>
    <name type="scientific">Xanthomonas oryzae pv. oryzae (strain PXO99A)</name>
    <dbReference type="NCBI Taxonomy" id="360094"/>
    <lineage>
        <taxon>Bacteria</taxon>
        <taxon>Pseudomonadati</taxon>
        <taxon>Pseudomonadota</taxon>
        <taxon>Gammaproteobacteria</taxon>
        <taxon>Lysobacterales</taxon>
        <taxon>Lysobacteraceae</taxon>
        <taxon>Xanthomonas</taxon>
    </lineage>
</organism>
<evidence type="ECO:0000255" key="1">
    <source>
        <dbReference type="HAMAP-Rule" id="MF_01310"/>
    </source>
</evidence>
<evidence type="ECO:0000305" key="2"/>
<proteinExistence type="inferred from homology"/>
<name>RS11_XANOP</name>
<comment type="function">
    <text evidence="1">Located on the platform of the 30S subunit, it bridges several disparate RNA helices of the 16S rRNA. Forms part of the Shine-Dalgarno cleft in the 70S ribosome.</text>
</comment>
<comment type="subunit">
    <text evidence="1">Part of the 30S ribosomal subunit. Interacts with proteins S7 and S18. Binds to IF-3.</text>
</comment>
<comment type="similarity">
    <text evidence="1">Belongs to the universal ribosomal protein uS11 family.</text>
</comment>